<name>NADE_YEAST</name>
<keyword id="KW-0067">ATP-binding</keyword>
<keyword id="KW-0436">Ligase</keyword>
<keyword id="KW-0520">NAD</keyword>
<keyword id="KW-0547">Nucleotide-binding</keyword>
<keyword id="KW-1185">Reference proteome</keyword>
<accession>P38795</accession>
<accession>D3DL24</accession>
<comment type="catalytic activity">
    <reaction>
        <text>deamido-NAD(+) + L-glutamine + ATP + H2O = L-glutamate + AMP + diphosphate + NAD(+) + H(+)</text>
        <dbReference type="Rhea" id="RHEA:24384"/>
        <dbReference type="ChEBI" id="CHEBI:15377"/>
        <dbReference type="ChEBI" id="CHEBI:15378"/>
        <dbReference type="ChEBI" id="CHEBI:29985"/>
        <dbReference type="ChEBI" id="CHEBI:30616"/>
        <dbReference type="ChEBI" id="CHEBI:33019"/>
        <dbReference type="ChEBI" id="CHEBI:57540"/>
        <dbReference type="ChEBI" id="CHEBI:58359"/>
        <dbReference type="ChEBI" id="CHEBI:58437"/>
        <dbReference type="ChEBI" id="CHEBI:456215"/>
        <dbReference type="EC" id="6.3.5.1"/>
    </reaction>
</comment>
<comment type="pathway">
    <text>Cofactor biosynthesis; NAD(+) biosynthesis; NAD(+) from deamido-NAD(+) (L-Gln route): step 1/1.</text>
</comment>
<comment type="miscellaneous">
    <text evidence="4">Present with 172 molecules/cell in log phase SD medium.</text>
</comment>
<comment type="similarity">
    <text evidence="5">In the C-terminal section; belongs to the NAD synthetase family.</text>
</comment>
<reference key="1">
    <citation type="journal article" date="1994" name="Science">
        <title>Complete nucleotide sequence of Saccharomyces cerevisiae chromosome VIII.</title>
        <authorList>
            <person name="Johnston M."/>
            <person name="Andrews S."/>
            <person name="Brinkman R."/>
            <person name="Cooper J."/>
            <person name="Ding H."/>
            <person name="Dover J."/>
            <person name="Du Z."/>
            <person name="Favello A."/>
            <person name="Fulton L."/>
            <person name="Gattung S."/>
            <person name="Geisel C."/>
            <person name="Kirsten J."/>
            <person name="Kucaba T."/>
            <person name="Hillier L.W."/>
            <person name="Jier M."/>
            <person name="Johnston L."/>
            <person name="Langston Y."/>
            <person name="Latreille P."/>
            <person name="Louis E.J."/>
            <person name="Macri C."/>
            <person name="Mardis E."/>
            <person name="Menezes S."/>
            <person name="Mouser L."/>
            <person name="Nhan M."/>
            <person name="Rifkin L."/>
            <person name="Riles L."/>
            <person name="St Peter H."/>
            <person name="Trevaskis E."/>
            <person name="Vaughan K."/>
            <person name="Vignati D."/>
            <person name="Wilcox L."/>
            <person name="Wohldman P."/>
            <person name="Waterston R."/>
            <person name="Wilson R."/>
            <person name="Vaudin M."/>
        </authorList>
    </citation>
    <scope>NUCLEOTIDE SEQUENCE [LARGE SCALE GENOMIC DNA]</scope>
    <source>
        <strain>ATCC 204508 / S288c</strain>
    </source>
</reference>
<reference key="2">
    <citation type="journal article" date="2014" name="G3 (Bethesda)">
        <title>The reference genome sequence of Saccharomyces cerevisiae: Then and now.</title>
        <authorList>
            <person name="Engel S.R."/>
            <person name="Dietrich F.S."/>
            <person name="Fisk D.G."/>
            <person name="Binkley G."/>
            <person name="Balakrishnan R."/>
            <person name="Costanzo M.C."/>
            <person name="Dwight S.S."/>
            <person name="Hitz B.C."/>
            <person name="Karra K."/>
            <person name="Nash R.S."/>
            <person name="Weng S."/>
            <person name="Wong E.D."/>
            <person name="Lloyd P."/>
            <person name="Skrzypek M.S."/>
            <person name="Miyasato S.R."/>
            <person name="Simison M."/>
            <person name="Cherry J.M."/>
        </authorList>
    </citation>
    <scope>GENOME REANNOTATION</scope>
    <source>
        <strain>ATCC 204508 / S288c</strain>
    </source>
</reference>
<reference key="3">
    <citation type="journal article" date="2003" name="Nature">
        <title>Global analysis of protein expression in yeast.</title>
        <authorList>
            <person name="Ghaemmaghami S."/>
            <person name="Huh W.-K."/>
            <person name="Bower K."/>
            <person name="Howson R.W."/>
            <person name="Belle A."/>
            <person name="Dephoure N."/>
            <person name="O'Shea E.K."/>
            <person name="Weissman J.S."/>
        </authorList>
    </citation>
    <scope>LEVEL OF PROTEIN EXPRESSION [LARGE SCALE ANALYSIS]</scope>
</reference>
<reference key="4">
    <citation type="journal article" date="2009" name="Science">
        <title>Global analysis of Cdk1 substrate phosphorylation sites provides insights into evolution.</title>
        <authorList>
            <person name="Holt L.J."/>
            <person name="Tuch B.B."/>
            <person name="Villen J."/>
            <person name="Johnson A.D."/>
            <person name="Gygi S.P."/>
            <person name="Morgan D.O."/>
        </authorList>
    </citation>
    <scope>IDENTIFICATION BY MASS SPECTROMETRY [LARGE SCALE ANALYSIS]</scope>
</reference>
<proteinExistence type="evidence at protein level"/>
<gene>
    <name type="primary">QNS1</name>
    <name type="ordered locus">YHR074W</name>
</gene>
<evidence type="ECO:0000250" key="1"/>
<evidence type="ECO:0000250" key="2">
    <source>
        <dbReference type="UniProtKB" id="P9WJJ3"/>
    </source>
</evidence>
<evidence type="ECO:0000255" key="3">
    <source>
        <dbReference type="PROSITE-ProRule" id="PRU00054"/>
    </source>
</evidence>
<evidence type="ECO:0000269" key="4">
    <source>
    </source>
</evidence>
<evidence type="ECO:0000305" key="5"/>
<dbReference type="EC" id="6.3.5.1"/>
<dbReference type="EMBL" id="U10556">
    <property type="protein sequence ID" value="AAB68889.1"/>
    <property type="molecule type" value="Genomic_DNA"/>
</dbReference>
<dbReference type="EMBL" id="BK006934">
    <property type="protein sequence ID" value="DAA06768.1"/>
    <property type="molecule type" value="Genomic_DNA"/>
</dbReference>
<dbReference type="PIR" id="S46811">
    <property type="entry name" value="S46811"/>
</dbReference>
<dbReference type="RefSeq" id="NP_011941.1">
    <property type="nucleotide sequence ID" value="NM_001179204.1"/>
</dbReference>
<dbReference type="SMR" id="P38795"/>
<dbReference type="BioGRID" id="36508">
    <property type="interactions" value="180"/>
</dbReference>
<dbReference type="DIP" id="DIP-5592N"/>
<dbReference type="FunCoup" id="P38795">
    <property type="interactions" value="861"/>
</dbReference>
<dbReference type="IntAct" id="P38795">
    <property type="interactions" value="6"/>
</dbReference>
<dbReference type="MINT" id="P38795"/>
<dbReference type="STRING" id="4932.YHR074W"/>
<dbReference type="iPTMnet" id="P38795"/>
<dbReference type="PaxDb" id="4932-YHR074W"/>
<dbReference type="PeptideAtlas" id="P38795"/>
<dbReference type="EnsemblFungi" id="YHR074W_mRNA">
    <property type="protein sequence ID" value="YHR074W"/>
    <property type="gene ID" value="YHR074W"/>
</dbReference>
<dbReference type="GeneID" id="856473"/>
<dbReference type="KEGG" id="sce:YHR074W"/>
<dbReference type="AGR" id="SGD:S000001116"/>
<dbReference type="SGD" id="S000001116">
    <property type="gene designation" value="QNS1"/>
</dbReference>
<dbReference type="VEuPathDB" id="FungiDB:YHR074W"/>
<dbReference type="eggNOG" id="KOG2303">
    <property type="taxonomic scope" value="Eukaryota"/>
</dbReference>
<dbReference type="GeneTree" id="ENSGT00390000010152"/>
<dbReference type="HOGENOM" id="CLU_011884_2_0_1"/>
<dbReference type="InParanoid" id="P38795"/>
<dbReference type="OMA" id="TSQEVCN"/>
<dbReference type="OrthoDB" id="2020662at2759"/>
<dbReference type="BioCyc" id="YEAST:MONOMER3O-845"/>
<dbReference type="Reactome" id="R-SCE-196807">
    <property type="pathway name" value="Nicotinate metabolism"/>
</dbReference>
<dbReference type="UniPathway" id="UPA00253">
    <property type="reaction ID" value="UER00334"/>
</dbReference>
<dbReference type="BioGRID-ORCS" id="856473">
    <property type="hits" value="8 hits in 10 CRISPR screens"/>
</dbReference>
<dbReference type="PRO" id="PR:P38795"/>
<dbReference type="Proteomes" id="UP000002311">
    <property type="component" value="Chromosome VIII"/>
</dbReference>
<dbReference type="RNAct" id="P38795">
    <property type="molecule type" value="protein"/>
</dbReference>
<dbReference type="GO" id="GO:0005737">
    <property type="term" value="C:cytoplasm"/>
    <property type="evidence" value="ECO:0000314"/>
    <property type="project" value="SGD"/>
</dbReference>
<dbReference type="GO" id="GO:0005634">
    <property type="term" value="C:nucleus"/>
    <property type="evidence" value="ECO:0000314"/>
    <property type="project" value="SGD"/>
</dbReference>
<dbReference type="GO" id="GO:0005524">
    <property type="term" value="F:ATP binding"/>
    <property type="evidence" value="ECO:0007669"/>
    <property type="project" value="UniProtKB-KW"/>
</dbReference>
<dbReference type="GO" id="GO:0004359">
    <property type="term" value="F:glutaminase activity"/>
    <property type="evidence" value="ECO:0000314"/>
    <property type="project" value="SGD"/>
</dbReference>
<dbReference type="GO" id="GO:0003952">
    <property type="term" value="F:NAD+ synthase (glutamine-hydrolyzing) activity"/>
    <property type="evidence" value="ECO:0000314"/>
    <property type="project" value="SGD"/>
</dbReference>
<dbReference type="GO" id="GO:0009435">
    <property type="term" value="P:NAD biosynthetic process"/>
    <property type="evidence" value="ECO:0000314"/>
    <property type="project" value="SGD"/>
</dbReference>
<dbReference type="CDD" id="cd07570">
    <property type="entry name" value="GAT_Gln-NAD-synth"/>
    <property type="match status" value="1"/>
</dbReference>
<dbReference type="CDD" id="cd00553">
    <property type="entry name" value="NAD_synthase"/>
    <property type="match status" value="1"/>
</dbReference>
<dbReference type="FunFam" id="3.40.50.620:FF:000036">
    <property type="entry name" value="Glutamine-dependent NAD(+) synthetase"/>
    <property type="match status" value="1"/>
</dbReference>
<dbReference type="FunFam" id="3.60.110.10:FF:000003">
    <property type="entry name" value="Glutamine-dependent NAD(+) synthetase"/>
    <property type="match status" value="1"/>
</dbReference>
<dbReference type="Gene3D" id="3.60.110.10">
    <property type="entry name" value="Carbon-nitrogen hydrolase"/>
    <property type="match status" value="1"/>
</dbReference>
<dbReference type="Gene3D" id="3.40.50.620">
    <property type="entry name" value="HUPs"/>
    <property type="match status" value="1"/>
</dbReference>
<dbReference type="HAMAP" id="MF_02090">
    <property type="entry name" value="NadE_glutamine_dep"/>
    <property type="match status" value="1"/>
</dbReference>
<dbReference type="InterPro" id="IPR003010">
    <property type="entry name" value="C-N_Hydrolase"/>
</dbReference>
<dbReference type="InterPro" id="IPR036526">
    <property type="entry name" value="C-N_Hydrolase_sf"/>
</dbReference>
<dbReference type="InterPro" id="IPR014445">
    <property type="entry name" value="Gln-dep_NAD_synthase"/>
</dbReference>
<dbReference type="InterPro" id="IPR022310">
    <property type="entry name" value="NAD/GMP_synthase"/>
</dbReference>
<dbReference type="InterPro" id="IPR003694">
    <property type="entry name" value="NAD_synthase"/>
</dbReference>
<dbReference type="InterPro" id="IPR014729">
    <property type="entry name" value="Rossmann-like_a/b/a_fold"/>
</dbReference>
<dbReference type="NCBIfam" id="TIGR00552">
    <property type="entry name" value="nadE"/>
    <property type="match status" value="1"/>
</dbReference>
<dbReference type="PANTHER" id="PTHR23090:SF9">
    <property type="entry name" value="GLUTAMINE-DEPENDENT NAD(+) SYNTHETASE"/>
    <property type="match status" value="1"/>
</dbReference>
<dbReference type="PANTHER" id="PTHR23090">
    <property type="entry name" value="NH 3 /GLUTAMINE-DEPENDENT NAD + SYNTHETASE"/>
    <property type="match status" value="1"/>
</dbReference>
<dbReference type="Pfam" id="PF00795">
    <property type="entry name" value="CN_hydrolase"/>
    <property type="match status" value="1"/>
</dbReference>
<dbReference type="Pfam" id="PF02540">
    <property type="entry name" value="NAD_synthase"/>
    <property type="match status" value="1"/>
</dbReference>
<dbReference type="PIRSF" id="PIRSF006630">
    <property type="entry name" value="NADS_GAT"/>
    <property type="match status" value="1"/>
</dbReference>
<dbReference type="SUPFAM" id="SSF52402">
    <property type="entry name" value="Adenine nucleotide alpha hydrolases-like"/>
    <property type="match status" value="1"/>
</dbReference>
<dbReference type="SUPFAM" id="SSF56317">
    <property type="entry name" value="Carbon-nitrogen hydrolase"/>
    <property type="match status" value="1"/>
</dbReference>
<dbReference type="PROSITE" id="PS50263">
    <property type="entry name" value="CN_HYDROLASE"/>
    <property type="match status" value="1"/>
</dbReference>
<organism>
    <name type="scientific">Saccharomyces cerevisiae (strain ATCC 204508 / S288c)</name>
    <name type="common">Baker's yeast</name>
    <dbReference type="NCBI Taxonomy" id="559292"/>
    <lineage>
        <taxon>Eukaryota</taxon>
        <taxon>Fungi</taxon>
        <taxon>Dikarya</taxon>
        <taxon>Ascomycota</taxon>
        <taxon>Saccharomycotina</taxon>
        <taxon>Saccharomycetes</taxon>
        <taxon>Saccharomycetales</taxon>
        <taxon>Saccharomycetaceae</taxon>
        <taxon>Saccharomyces</taxon>
    </lineage>
</organism>
<protein>
    <recommendedName>
        <fullName>Glutamine-dependent NAD(+) synthetase</fullName>
        <ecNumber>6.3.5.1</ecNumber>
    </recommendedName>
    <alternativeName>
        <fullName>NAD(+) synthase [glutamine-hydrolyzing]</fullName>
    </alternativeName>
</protein>
<feature type="chain" id="PRO_0000152248" description="Glutamine-dependent NAD(+) synthetase">
    <location>
        <begin position="1"/>
        <end position="714"/>
    </location>
</feature>
<feature type="domain" description="CN hydrolase" evidence="3">
    <location>
        <begin position="5"/>
        <end position="275"/>
    </location>
</feature>
<feature type="region of interest" description="Ligase">
    <location>
        <begin position="329"/>
        <end position="714"/>
    </location>
</feature>
<feature type="active site" description="Proton acceptor; for glutaminase activity" evidence="2">
    <location>
        <position position="45"/>
    </location>
</feature>
<feature type="active site" description="For glutaminase activity" evidence="2">
    <location>
        <position position="114"/>
    </location>
</feature>
<feature type="active site" description="Nucleophile; for glutaminase activity" evidence="2">
    <location>
        <position position="175"/>
    </location>
</feature>
<feature type="active site" evidence="1">
    <location>
        <position position="361"/>
    </location>
</feature>
<feature type="binding site" evidence="1">
    <location>
        <begin position="359"/>
        <end position="366"/>
    </location>
    <ligand>
        <name>ATP</name>
        <dbReference type="ChEBI" id="CHEBI:30616"/>
    </ligand>
</feature>
<sequence>MSHLITLATCNLNQWALDFEGNRDRILQSIKIAKERGARLRVGPELEITGYGCLDHFLENDVCLHSWEMYAQIIKNKETHGLILDIGMPVLHKNVRYNCRLLSLDGEILFIRPKIWLANDGNYREMRFFTPWMKPGVVEDFILPPEIQKVTGQRLVPFGDAVINSLDTCIGTETCEELFTPQSPHIAMSLDGVEIMTNSSGSHHELRKLNKRLDLILNATKRCGGVYLYANQRGCDGDRLYYDGCALIAINGTIVAQGSQFSLDDVEVVTATVDLEEVRSYRAAVMSRGLQASLAEIKFKRIDIPVELALMTSRFDPTVCPTKVREPFYHSPEEEIALGPACWMWDYLRRCNGTGFFLPLSGGIDSCATAMIVHSMCRLVTDAAQNGNEQVIKDVRKITRSGDDWIPDSPQDLASKIFHSCFMGTENSSKETRNRAKDLSNAIGSYHVDLKMDSLVSSVVSLFEVATGKKPIYKIFGGSQIENLALQNIQARLRMVLSYLFAQLLPWVRGIPNSGGLLVLGSANVDECLRGYLTKYDCSSADINPIGGISKTDLKRFIAYASKQYNMPILNDFLNATPTAELEPMTKDYVQSDEIDMGMTYEELGVFGYLRKVEKCGPYSMFLKLLHQWSPKLTPRQISEKVKRFFFFYAINRHKQTVLTPSYHAEQYSPEDNRFDLRPFLINPRFPWASRKIDEVVEQCEAHKGSTLDIMSID</sequence>